<name>SFSA_CLOBJ</name>
<reference key="1">
    <citation type="submission" date="2008-10" db="EMBL/GenBank/DDBJ databases">
        <title>Genome sequence of Clostridium botulinum A2 Kyoto.</title>
        <authorList>
            <person name="Shrivastava S."/>
            <person name="Brinkac L.M."/>
            <person name="Brown J.L."/>
            <person name="Bruce D."/>
            <person name="Detter C.C."/>
            <person name="Johnson E.A."/>
            <person name="Munk C.A."/>
            <person name="Smith L.A."/>
            <person name="Smith T.J."/>
            <person name="Sutton G."/>
            <person name="Brettin T.S."/>
        </authorList>
    </citation>
    <scope>NUCLEOTIDE SEQUENCE [LARGE SCALE GENOMIC DNA]</scope>
    <source>
        <strain>Kyoto / Type A2</strain>
    </source>
</reference>
<dbReference type="EMBL" id="CP001581">
    <property type="protein sequence ID" value="ACO84308.1"/>
    <property type="molecule type" value="Genomic_DNA"/>
</dbReference>
<dbReference type="RefSeq" id="WP_003359481.1">
    <property type="nucleotide sequence ID" value="NC_012563.1"/>
</dbReference>
<dbReference type="SMR" id="C1FPJ9"/>
<dbReference type="KEGG" id="cby:CLM_0042"/>
<dbReference type="eggNOG" id="COG1489">
    <property type="taxonomic scope" value="Bacteria"/>
</dbReference>
<dbReference type="HOGENOM" id="CLU_052299_1_0_9"/>
<dbReference type="Proteomes" id="UP000001374">
    <property type="component" value="Chromosome"/>
</dbReference>
<dbReference type="GO" id="GO:0003677">
    <property type="term" value="F:DNA binding"/>
    <property type="evidence" value="ECO:0007669"/>
    <property type="project" value="InterPro"/>
</dbReference>
<dbReference type="CDD" id="cd22359">
    <property type="entry name" value="SfsA-like_bacterial"/>
    <property type="match status" value="1"/>
</dbReference>
<dbReference type="FunFam" id="2.40.50.580:FF:000002">
    <property type="entry name" value="Sugar fermentation stimulation protein homolog"/>
    <property type="match status" value="1"/>
</dbReference>
<dbReference type="FunFam" id="3.40.1350.60:FF:000002">
    <property type="entry name" value="Sugar fermentation stimulation protein homolog"/>
    <property type="match status" value="1"/>
</dbReference>
<dbReference type="Gene3D" id="2.40.50.580">
    <property type="match status" value="1"/>
</dbReference>
<dbReference type="Gene3D" id="3.40.1350.60">
    <property type="match status" value="1"/>
</dbReference>
<dbReference type="HAMAP" id="MF_00095">
    <property type="entry name" value="SfsA"/>
    <property type="match status" value="1"/>
</dbReference>
<dbReference type="InterPro" id="IPR005224">
    <property type="entry name" value="SfsA"/>
</dbReference>
<dbReference type="InterPro" id="IPR040452">
    <property type="entry name" value="SfsA_C"/>
</dbReference>
<dbReference type="InterPro" id="IPR041465">
    <property type="entry name" value="SfsA_N"/>
</dbReference>
<dbReference type="NCBIfam" id="TIGR00230">
    <property type="entry name" value="sfsA"/>
    <property type="match status" value="1"/>
</dbReference>
<dbReference type="PANTHER" id="PTHR30545">
    <property type="entry name" value="SUGAR FERMENTATION STIMULATION PROTEIN A"/>
    <property type="match status" value="1"/>
</dbReference>
<dbReference type="PANTHER" id="PTHR30545:SF2">
    <property type="entry name" value="SUGAR FERMENTATION STIMULATION PROTEIN A"/>
    <property type="match status" value="1"/>
</dbReference>
<dbReference type="Pfam" id="PF03749">
    <property type="entry name" value="SfsA"/>
    <property type="match status" value="1"/>
</dbReference>
<dbReference type="Pfam" id="PF17746">
    <property type="entry name" value="SfsA_N"/>
    <property type="match status" value="1"/>
</dbReference>
<feature type="chain" id="PRO_1000196963" description="Sugar fermentation stimulation protein homolog">
    <location>
        <begin position="1"/>
        <end position="230"/>
    </location>
</feature>
<sequence>MKITKNILKAEFIKRPNRFQAYVKINEKIEMVHVPNTGRCKEILIPGSTVILREENNENRKTRYDLIAGYKGDMLISIDSQIPNKVVYEALMNFKIEILKEYTNIKREKTFGKSRFDFKLEKENGEVYYLEVKGVTLENDGLTMFPDAPTERGTKHILELIDVKNKGMGAGVLFLIQLNGVKKFTPNHKMDKNFGEALRLAKEKGVDILAYDCLVEESSISLNNPVSIEI</sequence>
<proteinExistence type="inferred from homology"/>
<evidence type="ECO:0000255" key="1">
    <source>
        <dbReference type="HAMAP-Rule" id="MF_00095"/>
    </source>
</evidence>
<organism>
    <name type="scientific">Clostridium botulinum (strain Kyoto / Type A2)</name>
    <dbReference type="NCBI Taxonomy" id="536232"/>
    <lineage>
        <taxon>Bacteria</taxon>
        <taxon>Bacillati</taxon>
        <taxon>Bacillota</taxon>
        <taxon>Clostridia</taxon>
        <taxon>Eubacteriales</taxon>
        <taxon>Clostridiaceae</taxon>
        <taxon>Clostridium</taxon>
    </lineage>
</organism>
<accession>C1FPJ9</accession>
<gene>
    <name evidence="1" type="primary">sfsA</name>
    <name type="ordered locus">CLM_0042</name>
</gene>
<comment type="similarity">
    <text evidence="1">Belongs to the SfsA family.</text>
</comment>
<protein>
    <recommendedName>
        <fullName evidence="1">Sugar fermentation stimulation protein homolog</fullName>
    </recommendedName>
</protein>